<sequence>MRFLSFRRLLLYHVLCLTLTEVSAHTVELNEMFGQIQSPGYPDSYPSDSEVTWNITVPEGFRVQLYFMHFNLESSYLCEYDYVKVETEDQVLATFCGRETTDTEQTPGQEVVLSPGSFMSVTFRSDFSNEERFTGFDAHYMAVDVDECKEREDEELSCDHYCHNYIGGYYCSCRFGYILHTDNRTCRVECSGNLFTQRTGTITSPDYPNPYPKSSECSYTIDLEEGFMVTLQFEDIFDIEDHPEVPCPYDYIKIKAGSKVWGPFCGEKSPEPISTQSHSIQILFRSDNSGENRGWRLSYRAAGNECPKLQPPVYGKIEPSQAVYSFKDQVLISCDTGYKVLKDNEVMDTFQIECLKDGAWSNKIPTCKIVDCGVPAVLKHGLVTFSTRNNLTTYKSEIRYSCQQPYYKMLHNTTGVYTCSAHGTWTNEVLKRSLPTCLPVCGLPKFSRKHISRIFNGRPAQKGTTPWIAMLSQLNGQPFCGGSLLGSNWVLTAAHCLHHPLDPEEPILHNSHLLSPSDFKIIMGKHWRRRSDEDEQHLHVKHIMLHPLYNPSTFENDLGLVELSESPRLNDFVMPVCLPEHPSTEGTMVIVSGWGKQFLQRLPENLMEIEIPIVNYHTCQEAYTPLGKKVTQDMICAGEKEGGKDACAGDSGGPMVTKDAERDQWYLVGVVSWGEDCGKKDRYGVYSYIYPNKDWIQRVTGVRN</sequence>
<protein>
    <recommendedName>
        <fullName>Mannan-binding lectin serine protease 1</fullName>
        <ecNumber>3.4.21.-</ecNumber>
    </recommendedName>
    <alternativeName>
        <fullName>Complement factor MASP-3</fullName>
    </alternativeName>
    <alternativeName>
        <fullName>Complement-activating component of Ra-reactive factor</fullName>
    </alternativeName>
    <alternativeName>
        <fullName>Mannose-binding lectin-associated serine protease 1</fullName>
        <shortName>MASP-1</shortName>
    </alternativeName>
    <alternativeName>
        <fullName>Mannose-binding protein-associated serine protease</fullName>
    </alternativeName>
    <alternativeName>
        <fullName>Ra-reactive factor serine protease p100</fullName>
        <shortName>RaRF</shortName>
    </alternativeName>
    <alternativeName>
        <fullName>Serine protease 5</fullName>
    </alternativeName>
    <component>
        <recommendedName>
            <fullName>Mannan-binding lectin serine protease 1 heavy chain</fullName>
        </recommendedName>
    </component>
    <component>
        <recommendedName>
            <fullName>Mannan-binding lectin serine protease 1 light chain</fullName>
        </recommendedName>
    </component>
</protein>
<proteinExistence type="evidence at protein level"/>
<dbReference type="EC" id="3.4.21.-"/>
<dbReference type="EMBL" id="AJ457084">
    <property type="protein sequence ID" value="CAD29746.1"/>
    <property type="molecule type" value="mRNA"/>
</dbReference>
<dbReference type="EMBL" id="AJ487624">
    <property type="protein sequence ID" value="CAD32173.1"/>
    <property type="molecule type" value="mRNA"/>
</dbReference>
<dbReference type="EMBL" id="BC085685">
    <property type="protein sequence ID" value="AAH85685.1"/>
    <property type="molecule type" value="mRNA"/>
</dbReference>
<dbReference type="EMBL" id="AJ277423">
    <property type="protein sequence ID" value="CAB89695.1"/>
    <property type="molecule type" value="mRNA"/>
</dbReference>
<dbReference type="EMBL" id="AF004661">
    <property type="protein sequence ID" value="AAB65832.1"/>
    <property type="molecule type" value="mRNA"/>
</dbReference>
<dbReference type="RefSeq" id="NP_071593.2">
    <molecule id="Q8CHN8-1"/>
    <property type="nucleotide sequence ID" value="NM_022257.2"/>
</dbReference>
<dbReference type="RefSeq" id="XP_006248588.1">
    <molecule id="Q8CHN8-2"/>
    <property type="nucleotide sequence ID" value="XM_006248526.5"/>
</dbReference>
<dbReference type="RefSeq" id="XP_008767026.1">
    <molecule id="Q8CHN8-3"/>
    <property type="nucleotide sequence ID" value="XM_008768804.4"/>
</dbReference>
<dbReference type="PDB" id="3POB">
    <property type="method" value="X-ray"/>
    <property type="resolution" value="1.80 A"/>
    <property type="chains" value="A=188-301"/>
</dbReference>
<dbReference type="PDB" id="3POE">
    <property type="method" value="X-ray"/>
    <property type="resolution" value="1.50 A"/>
    <property type="chains" value="A=188-301"/>
</dbReference>
<dbReference type="PDB" id="3POF">
    <property type="method" value="X-ray"/>
    <property type="resolution" value="1.50 A"/>
    <property type="chains" value="A/B=188-301"/>
</dbReference>
<dbReference type="PDB" id="3POG">
    <property type="method" value="X-ray"/>
    <property type="resolution" value="2.75 A"/>
    <property type="chains" value="A/B/C=188-301"/>
</dbReference>
<dbReference type="PDB" id="3POI">
    <property type="method" value="X-ray"/>
    <property type="resolution" value="1.70 A"/>
    <property type="chains" value="A/B=188-301"/>
</dbReference>
<dbReference type="PDB" id="3POJ">
    <property type="method" value="X-ray"/>
    <property type="resolution" value="1.45 A"/>
    <property type="chains" value="A/B=188-301"/>
</dbReference>
<dbReference type="PDB" id="5CKQ">
    <property type="method" value="X-ray"/>
    <property type="resolution" value="3.70 A"/>
    <property type="chains" value="A=25-301"/>
</dbReference>
<dbReference type="PDBsum" id="3POB"/>
<dbReference type="PDBsum" id="3POE"/>
<dbReference type="PDBsum" id="3POF"/>
<dbReference type="PDBsum" id="3POG"/>
<dbReference type="PDBsum" id="3POI"/>
<dbReference type="PDBsum" id="3POJ"/>
<dbReference type="PDBsum" id="5CKQ"/>
<dbReference type="SMR" id="Q8CHN8"/>
<dbReference type="CORUM" id="Q8CHN8"/>
<dbReference type="FunCoup" id="Q8CHN8">
    <property type="interactions" value="548"/>
</dbReference>
<dbReference type="STRING" id="10116.ENSRNOP00000002507"/>
<dbReference type="BindingDB" id="Q8CHN8"/>
<dbReference type="MEROPS" id="S01.198"/>
<dbReference type="GlyCosmos" id="Q8CHN8">
    <property type="glycosylation" value="6 sites, No reported glycans"/>
</dbReference>
<dbReference type="GlyGen" id="Q8CHN8">
    <property type="glycosylation" value="4 sites"/>
</dbReference>
<dbReference type="PhosphoSitePlus" id="Q8CHN8"/>
<dbReference type="Ensembl" id="ENSRNOT00000047678.5">
    <molecule id="Q8CHN8-3"/>
    <property type="protein sequence ID" value="ENSRNOP00000044812.3"/>
    <property type="gene ID" value="ENSRNOG00000001827.9"/>
</dbReference>
<dbReference type="Ensembl" id="ENSRNOT00000094154.1">
    <molecule id="Q8CHN8-1"/>
    <property type="protein sequence ID" value="ENSRNOP00000079792.1"/>
    <property type="gene ID" value="ENSRNOG00000001827.9"/>
</dbReference>
<dbReference type="GeneID" id="64023"/>
<dbReference type="KEGG" id="rno:64023"/>
<dbReference type="UCSC" id="RGD:620213">
    <molecule id="Q8CHN8-1"/>
    <property type="organism name" value="rat"/>
</dbReference>
<dbReference type="AGR" id="RGD:620213"/>
<dbReference type="CTD" id="5648"/>
<dbReference type="RGD" id="620213">
    <property type="gene designation" value="Masp1"/>
</dbReference>
<dbReference type="GeneTree" id="ENSGT00950000183084"/>
<dbReference type="HOGENOM" id="CLU_006842_14_0_1"/>
<dbReference type="InParanoid" id="Q8CHN8"/>
<dbReference type="OrthoDB" id="7119at9989"/>
<dbReference type="PhylomeDB" id="Q8CHN8"/>
<dbReference type="TreeFam" id="TF330373"/>
<dbReference type="BRENDA" id="3.4.21.B7">
    <property type="organism ID" value="5301"/>
</dbReference>
<dbReference type="Reactome" id="R-RNO-166662">
    <property type="pathway name" value="Lectin pathway of complement activation"/>
</dbReference>
<dbReference type="Reactome" id="R-RNO-166663">
    <property type="pathway name" value="Initial triggering of complement"/>
</dbReference>
<dbReference type="Reactome" id="R-RNO-2855086">
    <property type="pathway name" value="Ficolins bind to repetitive carbohydrate structures on the target cell surface"/>
</dbReference>
<dbReference type="SABIO-RK" id="Q8CHN8"/>
<dbReference type="EvolutionaryTrace" id="Q8CHN8"/>
<dbReference type="PRO" id="PR:Q8CHN8"/>
<dbReference type="Proteomes" id="UP000002494">
    <property type="component" value="Chromosome 11"/>
</dbReference>
<dbReference type="Bgee" id="ENSRNOG00000001827">
    <property type="expression patterns" value="Expressed in skeletal muscle tissue and 19 other cell types or tissues"/>
</dbReference>
<dbReference type="ExpressionAtlas" id="Q8CHN8">
    <property type="expression patterns" value="baseline and differential"/>
</dbReference>
<dbReference type="GO" id="GO:0005615">
    <property type="term" value="C:extracellular space"/>
    <property type="evidence" value="ECO:0000314"/>
    <property type="project" value="UniProtKB"/>
</dbReference>
<dbReference type="GO" id="GO:0005509">
    <property type="term" value="F:calcium ion binding"/>
    <property type="evidence" value="ECO:0000314"/>
    <property type="project" value="UniProtKB"/>
</dbReference>
<dbReference type="GO" id="GO:0048306">
    <property type="term" value="F:calcium-dependent protein binding"/>
    <property type="evidence" value="ECO:0000353"/>
    <property type="project" value="UniProtKB"/>
</dbReference>
<dbReference type="GO" id="GO:0008233">
    <property type="term" value="F:peptidase activity"/>
    <property type="evidence" value="ECO:0000266"/>
    <property type="project" value="RGD"/>
</dbReference>
<dbReference type="GO" id="GO:0042803">
    <property type="term" value="F:protein homodimerization activity"/>
    <property type="evidence" value="ECO:0000353"/>
    <property type="project" value="UniProtKB"/>
</dbReference>
<dbReference type="GO" id="GO:0004252">
    <property type="term" value="F:serine-type endopeptidase activity"/>
    <property type="evidence" value="ECO:0000314"/>
    <property type="project" value="UniProtKB"/>
</dbReference>
<dbReference type="GO" id="GO:0006956">
    <property type="term" value="P:complement activation"/>
    <property type="evidence" value="ECO:0000303"/>
    <property type="project" value="RGD"/>
</dbReference>
<dbReference type="GO" id="GO:0001867">
    <property type="term" value="P:complement activation, lectin pathway"/>
    <property type="evidence" value="ECO:0000250"/>
    <property type="project" value="UniProtKB"/>
</dbReference>
<dbReference type="GO" id="GO:0006508">
    <property type="term" value="P:proteolysis"/>
    <property type="evidence" value="ECO:0007669"/>
    <property type="project" value="UniProtKB-KW"/>
</dbReference>
<dbReference type="CDD" id="cd00033">
    <property type="entry name" value="CCP"/>
    <property type="match status" value="2"/>
</dbReference>
<dbReference type="CDD" id="cd00041">
    <property type="entry name" value="CUB"/>
    <property type="match status" value="2"/>
</dbReference>
<dbReference type="CDD" id="cd00054">
    <property type="entry name" value="EGF_CA"/>
    <property type="match status" value="1"/>
</dbReference>
<dbReference type="CDD" id="cd00190">
    <property type="entry name" value="Tryp_SPc"/>
    <property type="match status" value="1"/>
</dbReference>
<dbReference type="FunFam" id="2.40.10.10:FF:000015">
    <property type="entry name" value="Atrial natriuretic peptide-converting enzyme"/>
    <property type="match status" value="1"/>
</dbReference>
<dbReference type="FunFam" id="2.10.25.10:FF:000059">
    <property type="entry name" value="Mannan-binding lectin serine protease 1"/>
    <property type="match status" value="1"/>
</dbReference>
<dbReference type="FunFam" id="2.10.70.10:FF:000016">
    <property type="entry name" value="Mannan-binding lectin serine protease 1"/>
    <property type="match status" value="1"/>
</dbReference>
<dbReference type="FunFam" id="2.60.120.290:FF:000006">
    <property type="entry name" value="Mannan-binding lectin serine protease 1"/>
    <property type="match status" value="1"/>
</dbReference>
<dbReference type="FunFam" id="2.60.120.290:FF:000012">
    <property type="entry name" value="mannan-binding lectin serine protease 1 isoform X1"/>
    <property type="match status" value="1"/>
</dbReference>
<dbReference type="FunFam" id="2.10.70.10:FF:000028">
    <property type="entry name" value="mannan-binding lectin serine protease 1 isoform X2"/>
    <property type="match status" value="1"/>
</dbReference>
<dbReference type="Gene3D" id="2.10.70.10">
    <property type="entry name" value="Complement Module, domain 1"/>
    <property type="match status" value="2"/>
</dbReference>
<dbReference type="Gene3D" id="2.10.25.10">
    <property type="entry name" value="Laminin"/>
    <property type="match status" value="1"/>
</dbReference>
<dbReference type="Gene3D" id="2.60.120.290">
    <property type="entry name" value="Spermadhesin, CUB domain"/>
    <property type="match status" value="2"/>
</dbReference>
<dbReference type="Gene3D" id="2.40.10.10">
    <property type="entry name" value="Trypsin-like serine proteases"/>
    <property type="match status" value="1"/>
</dbReference>
<dbReference type="InterPro" id="IPR000859">
    <property type="entry name" value="CUB_dom"/>
</dbReference>
<dbReference type="InterPro" id="IPR001881">
    <property type="entry name" value="EGF-like_Ca-bd_dom"/>
</dbReference>
<dbReference type="InterPro" id="IPR000742">
    <property type="entry name" value="EGF-like_dom"/>
</dbReference>
<dbReference type="InterPro" id="IPR018097">
    <property type="entry name" value="EGF_Ca-bd_CS"/>
</dbReference>
<dbReference type="InterPro" id="IPR049883">
    <property type="entry name" value="NOTCH1_EGF-like"/>
</dbReference>
<dbReference type="InterPro" id="IPR024175">
    <property type="entry name" value="Pept_S1A_C1r/C1S/mannan-bd"/>
</dbReference>
<dbReference type="InterPro" id="IPR009003">
    <property type="entry name" value="Peptidase_S1_PA"/>
</dbReference>
<dbReference type="InterPro" id="IPR043504">
    <property type="entry name" value="Peptidase_S1_PA_chymotrypsin"/>
</dbReference>
<dbReference type="InterPro" id="IPR001314">
    <property type="entry name" value="Peptidase_S1A"/>
</dbReference>
<dbReference type="InterPro" id="IPR035914">
    <property type="entry name" value="Sperma_CUB_dom_sf"/>
</dbReference>
<dbReference type="InterPro" id="IPR035976">
    <property type="entry name" value="Sushi/SCR/CCP_sf"/>
</dbReference>
<dbReference type="InterPro" id="IPR000436">
    <property type="entry name" value="Sushi_SCR_CCP_dom"/>
</dbReference>
<dbReference type="InterPro" id="IPR001254">
    <property type="entry name" value="Trypsin_dom"/>
</dbReference>
<dbReference type="InterPro" id="IPR018114">
    <property type="entry name" value="TRYPSIN_HIS"/>
</dbReference>
<dbReference type="InterPro" id="IPR033116">
    <property type="entry name" value="TRYPSIN_SER"/>
</dbReference>
<dbReference type="PANTHER" id="PTHR24255">
    <property type="entry name" value="COMPLEMENT COMPONENT 1, S SUBCOMPONENT-RELATED"/>
    <property type="match status" value="1"/>
</dbReference>
<dbReference type="PANTHER" id="PTHR24255:SF13">
    <property type="entry name" value="MANNAN-BINDING LECTIN SERINE PROTEASE 1"/>
    <property type="match status" value="1"/>
</dbReference>
<dbReference type="Pfam" id="PF00431">
    <property type="entry name" value="CUB"/>
    <property type="match status" value="2"/>
</dbReference>
<dbReference type="Pfam" id="PF07645">
    <property type="entry name" value="EGF_CA"/>
    <property type="match status" value="1"/>
</dbReference>
<dbReference type="Pfam" id="PF00084">
    <property type="entry name" value="Sushi"/>
    <property type="match status" value="2"/>
</dbReference>
<dbReference type="Pfam" id="PF00089">
    <property type="entry name" value="Trypsin"/>
    <property type="match status" value="1"/>
</dbReference>
<dbReference type="PIRSF" id="PIRSF001155">
    <property type="entry name" value="C1r_C1s_MASP"/>
    <property type="match status" value="1"/>
</dbReference>
<dbReference type="PRINTS" id="PR00722">
    <property type="entry name" value="CHYMOTRYPSIN"/>
</dbReference>
<dbReference type="SMART" id="SM00032">
    <property type="entry name" value="CCP"/>
    <property type="match status" value="2"/>
</dbReference>
<dbReference type="SMART" id="SM00042">
    <property type="entry name" value="CUB"/>
    <property type="match status" value="2"/>
</dbReference>
<dbReference type="SMART" id="SM00179">
    <property type="entry name" value="EGF_CA"/>
    <property type="match status" value="1"/>
</dbReference>
<dbReference type="SMART" id="SM00020">
    <property type="entry name" value="Tryp_SPc"/>
    <property type="match status" value="1"/>
</dbReference>
<dbReference type="SUPFAM" id="SSF57535">
    <property type="entry name" value="Complement control module/SCR domain"/>
    <property type="match status" value="1"/>
</dbReference>
<dbReference type="SUPFAM" id="SSF57196">
    <property type="entry name" value="EGF/Laminin"/>
    <property type="match status" value="1"/>
</dbReference>
<dbReference type="SUPFAM" id="SSF49854">
    <property type="entry name" value="Spermadhesin, CUB domain"/>
    <property type="match status" value="2"/>
</dbReference>
<dbReference type="SUPFAM" id="SSF50494">
    <property type="entry name" value="Trypsin-like serine proteases"/>
    <property type="match status" value="1"/>
</dbReference>
<dbReference type="PROSITE" id="PS00010">
    <property type="entry name" value="ASX_HYDROXYL"/>
    <property type="match status" value="1"/>
</dbReference>
<dbReference type="PROSITE" id="PS01180">
    <property type="entry name" value="CUB"/>
    <property type="match status" value="2"/>
</dbReference>
<dbReference type="PROSITE" id="PS01186">
    <property type="entry name" value="EGF_2"/>
    <property type="match status" value="1"/>
</dbReference>
<dbReference type="PROSITE" id="PS01187">
    <property type="entry name" value="EGF_CA"/>
    <property type="match status" value="1"/>
</dbReference>
<dbReference type="PROSITE" id="PS50923">
    <property type="entry name" value="SUSHI"/>
    <property type="match status" value="2"/>
</dbReference>
<dbReference type="PROSITE" id="PS50240">
    <property type="entry name" value="TRYPSIN_DOM"/>
    <property type="match status" value="1"/>
</dbReference>
<dbReference type="PROSITE" id="PS00134">
    <property type="entry name" value="TRYPSIN_HIS"/>
    <property type="match status" value="1"/>
</dbReference>
<dbReference type="PROSITE" id="PS00135">
    <property type="entry name" value="TRYPSIN_SER"/>
    <property type="match status" value="1"/>
</dbReference>
<reference key="1">
    <citation type="journal article" date="2003" name="Genes Immun.">
        <title>Murine serine proteases MASP-1 and MASP-3, components of the lectin pathway activation complex of complement, are encoded by a single structural gene.</title>
        <authorList>
            <person name="Stover C.M."/>
            <person name="Lynch N.J."/>
            <person name="Dahl M.R."/>
            <person name="Hanson S."/>
            <person name="Takahashi M."/>
            <person name="Frankenberger M."/>
            <person name="Ziegler-Heitbrock L."/>
            <person name="Eperon I."/>
            <person name="Thiel S."/>
            <person name="Schwaeble W.J."/>
        </authorList>
    </citation>
    <scope>NUCLEOTIDE SEQUENCE [MRNA] (ISOFORM 1)</scope>
    <scope>NUCLEOTIDE SEQUENCE [MRNA] OF 307-461 (ISOFORM 2)</scope>
    <scope>SUBCELLULAR LOCATION</scope>
    <scope>TISSUE SPECIFICITY</scope>
    <source>
        <strain>Sprague-Dawley</strain>
        <tissue>Liver</tissue>
    </source>
</reference>
<reference key="2">
    <citation type="journal article" date="2004" name="Genome Res.">
        <title>The status, quality, and expansion of the NIH full-length cDNA project: the Mammalian Gene Collection (MGC).</title>
        <authorList>
            <consortium name="The MGC Project Team"/>
        </authorList>
    </citation>
    <scope>NUCLEOTIDE SEQUENCE [LARGE SCALE MRNA] (ISOFORM 3)</scope>
    <source>
        <tissue>Heart</tissue>
    </source>
</reference>
<reference key="3">
    <citation type="journal article" date="2000" name="J. Biol. Chem.">
        <title>Interaction of mannose-binding protein with associated serine proteases: effects of naturally occurring mutations.</title>
        <authorList>
            <person name="Wallis R."/>
            <person name="Dodd R.B."/>
        </authorList>
    </citation>
    <scope>NUCLEOTIDE SEQUENCE [MRNA] OF 4-704 (ISOFORM 1)</scope>
    <scope>GLYCOSYLATION</scope>
    <scope>HOMODIMERIZATION</scope>
    <scope>INTERACTION WITH MBL1</scope>
    <source>
        <tissue>Liver</tissue>
    </source>
</reference>
<reference key="4">
    <citation type="journal article" date="1997" name="Lab. Invest.">
        <title>The complement-activating protease P100 is expressed by hepatocytes and is induced by IL-6 in vitro and during the acute phase reaction in vivo.</title>
        <authorList>
            <person name="Knittel T."/>
            <person name="Fellmer P."/>
            <person name="Neubauer K."/>
            <person name="Kawakami M."/>
            <person name="Grundmann A."/>
            <person name="Ramadori G."/>
        </authorList>
    </citation>
    <scope>NUCLEOTIDE SEQUENCE [MRNA] OF 12-223 (ISOFORM 1)</scope>
</reference>
<reference key="5">
    <citation type="journal article" date="2001" name="J. Biol. Chem.">
        <title>Stoichiometry of complexes between mannose-binding protein and its associated serine proteases. Defining functional units for complement activation.</title>
        <authorList>
            <person name="Chen C.-B."/>
            <person name="Wallis R."/>
        </authorList>
    </citation>
    <scope>MUTAGENESIS OF SER-651</scope>
    <scope>AUTOCATALYTIC CLEAVAGE</scope>
    <scope>HOMODIMERIZATION</scope>
    <scope>INTERACTION WITH MBL1</scope>
</reference>
<reference key="6">
    <citation type="journal article" date="2004" name="J. Biol. Chem.">
        <title>Two mechanisms for mannose-binding protein modulation of the activity of its associated serine proteases.</title>
        <authorList>
            <person name="Chen C.-B."/>
            <person name="Wallis R."/>
        </authorList>
    </citation>
    <scope>CATALYTIC ACTIVITY</scope>
    <scope>BIOPHYSICOCHEMICAL PROPERTIES</scope>
</reference>
<accession>Q8CHN8</accession>
<accession>O09020</accession>
<accession>Q5U365</accession>
<accession>Q8CG41</accession>
<accession>Q9JJS9</accession>
<gene>
    <name type="primary">Masp1</name>
    <name type="synonym">Crarf</name>
    <name type="synonym">Masp3</name>
</gene>
<name>MASP1_RAT</name>
<keyword id="KW-0002">3D-structure</keyword>
<keyword id="KW-0025">Alternative splicing</keyword>
<keyword id="KW-0068">Autocatalytic cleavage</keyword>
<keyword id="KW-0106">Calcium</keyword>
<keyword id="KW-1018">Complement activation lectin pathway</keyword>
<keyword id="KW-1015">Disulfide bond</keyword>
<keyword id="KW-0245">EGF-like domain</keyword>
<keyword id="KW-0325">Glycoprotein</keyword>
<keyword id="KW-0378">Hydrolase</keyword>
<keyword id="KW-0379">Hydroxylation</keyword>
<keyword id="KW-0391">Immunity</keyword>
<keyword id="KW-0399">Innate immunity</keyword>
<keyword id="KW-0479">Metal-binding</keyword>
<keyword id="KW-0645">Protease</keyword>
<keyword id="KW-1185">Reference proteome</keyword>
<keyword id="KW-0677">Repeat</keyword>
<keyword id="KW-0964">Secreted</keyword>
<keyword id="KW-0720">Serine protease</keyword>
<keyword id="KW-0732">Signal</keyword>
<keyword id="KW-0768">Sushi</keyword>
<feature type="signal peptide" evidence="1">
    <location>
        <begin position="1"/>
        <end position="24"/>
    </location>
</feature>
<feature type="chain" id="PRO_0000369242" description="Mannan-binding lectin serine protease 1">
    <location>
        <begin position="25"/>
        <end position="704"/>
    </location>
</feature>
<feature type="chain" id="PRO_0000369243" description="Mannan-binding lectin serine protease 1 heavy chain">
    <location>
        <begin position="25"/>
        <end position="453"/>
    </location>
</feature>
<feature type="chain" id="PRO_0000369244" description="Mannan-binding lectin serine protease 1 light chain">
    <location>
        <begin position="454"/>
        <end position="704"/>
    </location>
</feature>
<feature type="domain" description="CUB 1" evidence="4">
    <location>
        <begin position="25"/>
        <end position="143"/>
    </location>
</feature>
<feature type="domain" description="EGF-like; calcium-binding" evidence="1">
    <location>
        <begin position="144"/>
        <end position="187"/>
    </location>
</feature>
<feature type="domain" description="CUB 2" evidence="4">
    <location>
        <begin position="190"/>
        <end position="302"/>
    </location>
</feature>
<feature type="domain" description="Sushi 1" evidence="6">
    <location>
        <begin position="304"/>
        <end position="369"/>
    </location>
</feature>
<feature type="domain" description="Sushi 2" evidence="6">
    <location>
        <begin position="370"/>
        <end position="439"/>
    </location>
</feature>
<feature type="domain" description="Peptidase S1" evidence="5">
    <location>
        <begin position="454"/>
        <end position="701"/>
    </location>
</feature>
<feature type="region of interest" description="Interaction with MBL1">
    <location>
        <begin position="25"/>
        <end position="305"/>
    </location>
</feature>
<feature type="region of interest" description="Interaction with FCN2" evidence="1">
    <location>
        <begin position="25"/>
        <end position="283"/>
    </location>
</feature>
<feature type="region of interest" description="Homodimerization">
    <location>
        <begin position="25"/>
        <end position="189"/>
    </location>
</feature>
<feature type="region of interest" description="Interaction with MBL2" evidence="1">
    <location>
        <begin position="25"/>
        <end position="189"/>
    </location>
</feature>
<feature type="active site" description="Charge relay system" evidence="1">
    <location>
        <position position="495"/>
    </location>
</feature>
<feature type="active site" description="Charge relay system" evidence="1">
    <location>
        <position position="557"/>
    </location>
</feature>
<feature type="active site" description="Charge relay system" evidence="1">
    <location>
        <position position="651"/>
    </location>
</feature>
<feature type="binding site" evidence="1">
    <location>
        <position position="73"/>
    </location>
    <ligand>
        <name>Ca(2+)</name>
        <dbReference type="ChEBI" id="CHEBI:29108"/>
        <label>1</label>
    </ligand>
</feature>
<feature type="binding site" evidence="1">
    <location>
        <position position="81"/>
    </location>
    <ligand>
        <name>Ca(2+)</name>
        <dbReference type="ChEBI" id="CHEBI:29108"/>
        <label>1</label>
    </ligand>
</feature>
<feature type="binding site" evidence="1">
    <location>
        <position position="126"/>
    </location>
    <ligand>
        <name>Ca(2+)</name>
        <dbReference type="ChEBI" id="CHEBI:29108"/>
        <label>1</label>
    </ligand>
</feature>
<feature type="binding site" evidence="1">
    <location>
        <position position="128"/>
    </location>
    <ligand>
        <name>Ca(2+)</name>
        <dbReference type="ChEBI" id="CHEBI:29108"/>
        <label>1</label>
    </ligand>
</feature>
<feature type="binding site" evidence="1">
    <location>
        <position position="144"/>
    </location>
    <ligand>
        <name>Ca(2+)</name>
        <dbReference type="ChEBI" id="CHEBI:29108"/>
        <label>2</label>
    </ligand>
</feature>
<feature type="binding site" evidence="1">
    <location>
        <position position="145"/>
    </location>
    <ligand>
        <name>Ca(2+)</name>
        <dbReference type="ChEBI" id="CHEBI:29108"/>
        <label>2</label>
    </ligand>
</feature>
<feature type="binding site" evidence="1">
    <location>
        <position position="147"/>
    </location>
    <ligand>
        <name>Ca(2+)</name>
        <dbReference type="ChEBI" id="CHEBI:29108"/>
        <label>2</label>
    </ligand>
</feature>
<feature type="binding site" evidence="1">
    <location>
        <position position="164"/>
    </location>
    <ligand>
        <name>Ca(2+)</name>
        <dbReference type="ChEBI" id="CHEBI:29108"/>
        <label>2</label>
    </ligand>
</feature>
<feature type="binding site" evidence="1">
    <location>
        <position position="165"/>
    </location>
    <ligand>
        <name>Ca(2+)</name>
        <dbReference type="ChEBI" id="CHEBI:29108"/>
        <label>2</label>
    </ligand>
</feature>
<feature type="binding site" evidence="1">
    <location>
        <position position="168"/>
    </location>
    <ligand>
        <name>Ca(2+)</name>
        <dbReference type="ChEBI" id="CHEBI:29108"/>
        <label>2</label>
    </ligand>
</feature>
<feature type="binding site" evidence="1">
    <location>
        <position position="240"/>
    </location>
    <ligand>
        <name>Ca(2+)</name>
        <dbReference type="ChEBI" id="CHEBI:29108"/>
        <label>3</label>
    </ligand>
</feature>
<feature type="binding site" evidence="1">
    <location>
        <position position="250"/>
    </location>
    <ligand>
        <name>Ca(2+)</name>
        <dbReference type="ChEBI" id="CHEBI:29108"/>
        <label>3</label>
    </ligand>
</feature>
<feature type="binding site" evidence="1">
    <location>
        <position position="287"/>
    </location>
    <ligand>
        <name>Ca(2+)</name>
        <dbReference type="ChEBI" id="CHEBI:29108"/>
        <label>3</label>
    </ligand>
</feature>
<feature type="binding site" evidence="1">
    <location>
        <position position="289"/>
    </location>
    <ligand>
        <name>Ca(2+)</name>
        <dbReference type="ChEBI" id="CHEBI:29108"/>
        <label>3</label>
    </ligand>
</feature>
<feature type="site" description="Cleavage; by autolysis" evidence="1">
    <location>
        <begin position="453"/>
        <end position="454"/>
    </location>
</feature>
<feature type="modified residue" description="(3R)-3-hydroxyasparagine" evidence="3">
    <location>
        <position position="164"/>
    </location>
</feature>
<feature type="glycosylation site" description="N-linked (GlcNAc...) asparagine" evidence="3">
    <location>
        <position position="54"/>
    </location>
</feature>
<feature type="glycosylation site" description="N-linked (GlcNAc...) asparagine" evidence="3">
    <location>
        <position position="183"/>
    </location>
</feature>
<feature type="glycosylation site" description="N-linked (GlcNAc...) asparagine" evidence="3">
    <location>
        <position position="390"/>
    </location>
</feature>
<feature type="glycosylation site" description="N-linked (GlcNAc...) asparagine" evidence="3">
    <location>
        <position position="412"/>
    </location>
</feature>
<feature type="disulfide bond" evidence="1">
    <location>
        <begin position="78"/>
        <end position="96"/>
    </location>
</feature>
<feature type="disulfide bond" evidence="1">
    <location>
        <begin position="148"/>
        <end position="162"/>
    </location>
</feature>
<feature type="disulfide bond" evidence="1">
    <location>
        <begin position="158"/>
        <end position="171"/>
    </location>
</feature>
<feature type="disulfide bond" evidence="1">
    <location>
        <begin position="173"/>
        <end position="186"/>
    </location>
</feature>
<feature type="disulfide bond" evidence="1">
    <location>
        <begin position="190"/>
        <end position="217"/>
    </location>
</feature>
<feature type="disulfide bond" evidence="1">
    <location>
        <begin position="247"/>
        <end position="265"/>
    </location>
</feature>
<feature type="disulfide bond" evidence="1">
    <location>
        <begin position="306"/>
        <end position="354"/>
    </location>
</feature>
<feature type="disulfide bond" evidence="1">
    <location>
        <begin position="334"/>
        <end position="367"/>
    </location>
</feature>
<feature type="disulfide bond" evidence="1">
    <location>
        <begin position="372"/>
        <end position="419"/>
    </location>
</feature>
<feature type="disulfide bond" evidence="1">
    <location>
        <begin position="402"/>
        <end position="437"/>
    </location>
</feature>
<feature type="disulfide bond" description="Interchain (between heavy and light chains)" evidence="4 5 6">
    <location>
        <begin position="441"/>
        <end position="577"/>
    </location>
</feature>
<feature type="disulfide bond" evidence="1">
    <location>
        <begin position="480"/>
        <end position="496"/>
    </location>
</feature>
<feature type="disulfide bond" evidence="1">
    <location>
        <begin position="619"/>
        <end position="636"/>
    </location>
</feature>
<feature type="disulfide bond" evidence="1">
    <location>
        <begin position="647"/>
        <end position="677"/>
    </location>
</feature>
<feature type="splice variant" id="VSP_036816" description="In isoform 3." evidence="12">
    <original>IVDCGVPAVLKHGLVTF</original>
    <variation>KSEIDLEEELESEQVAE</variation>
    <location>
        <begin position="369"/>
        <end position="385"/>
    </location>
</feature>
<feature type="splice variant" id="VSP_036817" description="In isoform 3." evidence="12">
    <location>
        <begin position="386"/>
        <end position="704"/>
    </location>
</feature>
<feature type="splice variant" id="VSP_036818" description="In isoform 2." evidence="11">
    <original>L</original>
    <variation>QPSRALPNLVKRIIGGRNAELGLFPWQALIVVEDTSRIPNDKWFGSGALLSESWILTAAHVLRSQRRDNTVIPVSKDHVTVYLGLHDVRDKSGAVNSSAARVVLHPDFNIQNYNHDIALVQLQEPVPLGAHVMPICLPRPEPEGPAPHMLGLVAGWGISNPNVTVDEIIISGTRTLSDVLQYVKLPVVSHAECKASYESRSGNYSVTENMFCAGYYEGGKDTCLGDSGGAFVIFDEMSQRWVAQGLVSWGGPEECGSKQVYGVYTKVSNYVDWLLEEMNSPRGVRELQVER</variation>
    <location>
        <position position="443"/>
    </location>
</feature>
<feature type="splice variant" id="VSP_036819" description="In isoform 2." evidence="11">
    <location>
        <begin position="444"/>
        <end position="704"/>
    </location>
</feature>
<feature type="mutagenesis site" description="Prevents protease self-activation through proteolytic cleavage into heavy and light chain." evidence="8">
    <original>S</original>
    <variation>A</variation>
    <location>
        <position position="651"/>
    </location>
</feature>
<feature type="sequence conflict" description="In Ref. 1; CAD29746." evidence="13" ref="1">
    <location>
        <position position="60"/>
    </location>
</feature>
<feature type="sequence conflict" description="In Ref. 1; CAD29746." evidence="13" ref="1">
    <original>Q</original>
    <variation>H</variation>
    <location>
        <position position="232"/>
    </location>
</feature>
<feature type="strand" evidence="14">
    <location>
        <begin position="190"/>
        <end position="195"/>
    </location>
</feature>
<feature type="strand" evidence="14">
    <location>
        <begin position="197"/>
        <end position="203"/>
    </location>
</feature>
<feature type="turn" evidence="14">
    <location>
        <begin position="205"/>
        <end position="208"/>
    </location>
</feature>
<feature type="strand" evidence="14">
    <location>
        <begin position="216"/>
        <end position="222"/>
    </location>
</feature>
<feature type="strand" evidence="14">
    <location>
        <begin position="230"/>
        <end position="233"/>
    </location>
</feature>
<feature type="strand" evidence="14">
    <location>
        <begin position="243"/>
        <end position="247"/>
    </location>
</feature>
<feature type="strand" evidence="14">
    <location>
        <begin position="251"/>
        <end position="256"/>
    </location>
</feature>
<feature type="strand" evidence="14">
    <location>
        <begin position="259"/>
        <end position="264"/>
    </location>
</feature>
<feature type="strand" evidence="14">
    <location>
        <begin position="266"/>
        <end position="268"/>
    </location>
</feature>
<feature type="strand" evidence="14">
    <location>
        <begin position="278"/>
        <end position="285"/>
    </location>
</feature>
<feature type="strand" evidence="14">
    <location>
        <begin position="296"/>
        <end position="300"/>
    </location>
</feature>
<feature type="glycosylation site" description="N-linked (GlcNAc...) asparagine" evidence="13">
    <location sequence="Q8CHN8-2">
        <position position="538"/>
    </location>
</feature>
<feature type="glycosylation site" description="N-linked (GlcNAc...) asparagine" evidence="13">
    <location sequence="Q8CHN8-2">
        <position position="604"/>
    </location>
</feature>
<comment type="function">
    <text evidence="2">Functions in the lectin pathway of complement, which performs a key role in innate immunity by recognizing pathogens through patterns of sugar moieties and neutralizing them. The lectin pathway is triggered upon binding of mannan-binding lectin (MBL) and ficolins to sugar moieties which leads to activation of the associated proteases MASP1 and MASP2. Functions as an endopeptidase and may activate MASP2 or C2 or directly activate C3 the key component of complement reaction. Isoform 2 may have an inhibitory effect on the activation of the lectin pathway of complement or may cleave IGFBP5. Also plays a role in development.</text>
</comment>
<comment type="activity regulation">
    <text evidence="1">Inhibited by SERPING1 and A2M.</text>
</comment>
<comment type="biophysicochemical properties">
    <kinetics>
        <KM evidence="10">13 uM for C2 (at 37 degrees Celsius)</KM>
    </kinetics>
</comment>
<comment type="subunit">
    <text evidence="2">Homodimer. Interacts with the oligomeric lectins MBL2, FCN2 and FCN3; triggers the lectin pathway of complement through activation of C3. Interacts with SERPING1. Interacts with COLEC11; probably triggers the lectin pathway of complement.</text>
</comment>
<comment type="subcellular location">
    <subcellularLocation>
        <location evidence="9">Secreted</location>
    </subcellularLocation>
</comment>
<comment type="alternative products">
    <event type="alternative splicing"/>
    <isoform>
        <id>Q8CHN8-1</id>
        <name>1</name>
        <name>MASP-1</name>
        <sequence type="displayed"/>
    </isoform>
    <isoform>
        <id>Q8CHN8-2</id>
        <name>2</name>
        <name>MASP-3</name>
        <sequence type="described" ref="VSP_036818 VSP_036819"/>
    </isoform>
    <isoform>
        <id>Q8CHN8-3</id>
        <name>3</name>
        <sequence type="described" ref="VSP_036816 VSP_036817"/>
    </isoform>
</comment>
<comment type="tissue specificity">
    <text evidence="9">Protein of the plasma which is primarily expressed by liver.</text>
</comment>
<comment type="PTM">
    <text evidence="1">The iron and 2-oxoglutarate dependent 3-hydroxylation of aspartate and asparagine is (R) stereospecific within EGF domains.</text>
</comment>
<comment type="PTM">
    <text evidence="7">N-glycosylated. Some N-linked glycan are of the complex-type.</text>
</comment>
<comment type="PTM">
    <text evidence="1">Autoproteolytic processing of the proenzyme produces the active enzyme composed on the heavy and the light chain held together by a disulfide bond. Isoform 1 but not isoform 2 is activated through autoproteolytic processing (By similarity).</text>
</comment>
<comment type="similarity">
    <text evidence="5">Belongs to the peptidase S1 family.</text>
</comment>
<organism>
    <name type="scientific">Rattus norvegicus</name>
    <name type="common">Rat</name>
    <dbReference type="NCBI Taxonomy" id="10116"/>
    <lineage>
        <taxon>Eukaryota</taxon>
        <taxon>Metazoa</taxon>
        <taxon>Chordata</taxon>
        <taxon>Craniata</taxon>
        <taxon>Vertebrata</taxon>
        <taxon>Euteleostomi</taxon>
        <taxon>Mammalia</taxon>
        <taxon>Eutheria</taxon>
        <taxon>Euarchontoglires</taxon>
        <taxon>Glires</taxon>
        <taxon>Rodentia</taxon>
        <taxon>Myomorpha</taxon>
        <taxon>Muroidea</taxon>
        <taxon>Muridae</taxon>
        <taxon>Murinae</taxon>
        <taxon>Rattus</taxon>
    </lineage>
</organism>
<evidence type="ECO:0000250" key="1"/>
<evidence type="ECO:0000250" key="2">
    <source>
        <dbReference type="UniProtKB" id="P48740"/>
    </source>
</evidence>
<evidence type="ECO:0000255" key="3"/>
<evidence type="ECO:0000255" key="4">
    <source>
        <dbReference type="PROSITE-ProRule" id="PRU00059"/>
    </source>
</evidence>
<evidence type="ECO:0000255" key="5">
    <source>
        <dbReference type="PROSITE-ProRule" id="PRU00274"/>
    </source>
</evidence>
<evidence type="ECO:0000255" key="6">
    <source>
        <dbReference type="PROSITE-ProRule" id="PRU00302"/>
    </source>
</evidence>
<evidence type="ECO:0000269" key="7">
    <source>
    </source>
</evidence>
<evidence type="ECO:0000269" key="8">
    <source>
    </source>
</evidence>
<evidence type="ECO:0000269" key="9">
    <source>
    </source>
</evidence>
<evidence type="ECO:0000269" key="10">
    <source>
    </source>
</evidence>
<evidence type="ECO:0000303" key="11">
    <source>
    </source>
</evidence>
<evidence type="ECO:0000303" key="12">
    <source>
    </source>
</evidence>
<evidence type="ECO:0000305" key="13"/>
<evidence type="ECO:0007829" key="14">
    <source>
        <dbReference type="PDB" id="3POJ"/>
    </source>
</evidence>